<dbReference type="EC" id="7.1.2.2" evidence="1"/>
<dbReference type="EMBL" id="CP000511">
    <property type="protein sequence ID" value="ABM15107.1"/>
    <property type="molecule type" value="Genomic_DNA"/>
</dbReference>
<dbReference type="RefSeq" id="WP_011781485.1">
    <property type="nucleotide sequence ID" value="NC_008726.1"/>
</dbReference>
<dbReference type="SMR" id="A1TD57"/>
<dbReference type="STRING" id="350058.Mvan_4330"/>
<dbReference type="KEGG" id="mva:Mvan_4330"/>
<dbReference type="eggNOG" id="COG0056">
    <property type="taxonomic scope" value="Bacteria"/>
</dbReference>
<dbReference type="HOGENOM" id="CLU_010091_2_1_11"/>
<dbReference type="Proteomes" id="UP000009159">
    <property type="component" value="Chromosome"/>
</dbReference>
<dbReference type="GO" id="GO:0005886">
    <property type="term" value="C:plasma membrane"/>
    <property type="evidence" value="ECO:0007669"/>
    <property type="project" value="UniProtKB-SubCell"/>
</dbReference>
<dbReference type="GO" id="GO:0045259">
    <property type="term" value="C:proton-transporting ATP synthase complex"/>
    <property type="evidence" value="ECO:0007669"/>
    <property type="project" value="UniProtKB-KW"/>
</dbReference>
<dbReference type="GO" id="GO:0043531">
    <property type="term" value="F:ADP binding"/>
    <property type="evidence" value="ECO:0007669"/>
    <property type="project" value="TreeGrafter"/>
</dbReference>
<dbReference type="GO" id="GO:0005524">
    <property type="term" value="F:ATP binding"/>
    <property type="evidence" value="ECO:0007669"/>
    <property type="project" value="UniProtKB-UniRule"/>
</dbReference>
<dbReference type="GO" id="GO:0046933">
    <property type="term" value="F:proton-transporting ATP synthase activity, rotational mechanism"/>
    <property type="evidence" value="ECO:0007669"/>
    <property type="project" value="UniProtKB-UniRule"/>
</dbReference>
<dbReference type="CDD" id="cd18113">
    <property type="entry name" value="ATP-synt_F1_alpha_C"/>
    <property type="match status" value="1"/>
</dbReference>
<dbReference type="CDD" id="cd18116">
    <property type="entry name" value="ATP-synt_F1_alpha_N"/>
    <property type="match status" value="1"/>
</dbReference>
<dbReference type="CDD" id="cd01132">
    <property type="entry name" value="F1-ATPase_alpha_CD"/>
    <property type="match status" value="1"/>
</dbReference>
<dbReference type="FunFam" id="1.20.150.20:FF:000001">
    <property type="entry name" value="ATP synthase subunit alpha"/>
    <property type="match status" value="1"/>
</dbReference>
<dbReference type="FunFam" id="3.40.50.300:FF:000002">
    <property type="entry name" value="ATP synthase subunit alpha"/>
    <property type="match status" value="1"/>
</dbReference>
<dbReference type="Gene3D" id="2.40.30.20">
    <property type="match status" value="1"/>
</dbReference>
<dbReference type="Gene3D" id="1.20.150.20">
    <property type="entry name" value="ATP synthase alpha/beta chain, C-terminal domain"/>
    <property type="match status" value="1"/>
</dbReference>
<dbReference type="Gene3D" id="3.40.50.300">
    <property type="entry name" value="P-loop containing nucleotide triphosphate hydrolases"/>
    <property type="match status" value="1"/>
</dbReference>
<dbReference type="HAMAP" id="MF_01346">
    <property type="entry name" value="ATP_synth_alpha_bact"/>
    <property type="match status" value="1"/>
</dbReference>
<dbReference type="InterPro" id="IPR023366">
    <property type="entry name" value="ATP_synth_asu-like_sf"/>
</dbReference>
<dbReference type="InterPro" id="IPR000793">
    <property type="entry name" value="ATP_synth_asu_C"/>
</dbReference>
<dbReference type="InterPro" id="IPR038376">
    <property type="entry name" value="ATP_synth_asu_C_sf"/>
</dbReference>
<dbReference type="InterPro" id="IPR033732">
    <property type="entry name" value="ATP_synth_F1_a_nt-bd_dom"/>
</dbReference>
<dbReference type="InterPro" id="IPR005294">
    <property type="entry name" value="ATP_synth_F1_asu"/>
</dbReference>
<dbReference type="InterPro" id="IPR020003">
    <property type="entry name" value="ATPase_a/bsu_AS"/>
</dbReference>
<dbReference type="InterPro" id="IPR004100">
    <property type="entry name" value="ATPase_F1/V1/A1_a/bsu_N"/>
</dbReference>
<dbReference type="InterPro" id="IPR036121">
    <property type="entry name" value="ATPase_F1/V1/A1_a/bsu_N_sf"/>
</dbReference>
<dbReference type="InterPro" id="IPR000194">
    <property type="entry name" value="ATPase_F1/V1/A1_a/bsu_nucl-bd"/>
</dbReference>
<dbReference type="InterPro" id="IPR027417">
    <property type="entry name" value="P-loop_NTPase"/>
</dbReference>
<dbReference type="NCBIfam" id="TIGR00962">
    <property type="entry name" value="atpA"/>
    <property type="match status" value="1"/>
</dbReference>
<dbReference type="NCBIfam" id="NF009884">
    <property type="entry name" value="PRK13343.1"/>
    <property type="match status" value="1"/>
</dbReference>
<dbReference type="PANTHER" id="PTHR48082">
    <property type="entry name" value="ATP SYNTHASE SUBUNIT ALPHA, MITOCHONDRIAL"/>
    <property type="match status" value="1"/>
</dbReference>
<dbReference type="PANTHER" id="PTHR48082:SF2">
    <property type="entry name" value="ATP SYNTHASE SUBUNIT ALPHA, MITOCHONDRIAL"/>
    <property type="match status" value="1"/>
</dbReference>
<dbReference type="Pfam" id="PF00006">
    <property type="entry name" value="ATP-synt_ab"/>
    <property type="match status" value="1"/>
</dbReference>
<dbReference type="Pfam" id="PF00306">
    <property type="entry name" value="ATP-synt_ab_C"/>
    <property type="match status" value="1"/>
</dbReference>
<dbReference type="Pfam" id="PF02874">
    <property type="entry name" value="ATP-synt_ab_N"/>
    <property type="match status" value="1"/>
</dbReference>
<dbReference type="SUPFAM" id="SSF47917">
    <property type="entry name" value="C-terminal domain of alpha and beta subunits of F1 ATP synthase"/>
    <property type="match status" value="1"/>
</dbReference>
<dbReference type="SUPFAM" id="SSF50615">
    <property type="entry name" value="N-terminal domain of alpha and beta subunits of F1 ATP synthase"/>
    <property type="match status" value="1"/>
</dbReference>
<dbReference type="SUPFAM" id="SSF52540">
    <property type="entry name" value="P-loop containing nucleoside triphosphate hydrolases"/>
    <property type="match status" value="1"/>
</dbReference>
<dbReference type="PROSITE" id="PS00152">
    <property type="entry name" value="ATPASE_ALPHA_BETA"/>
    <property type="match status" value="1"/>
</dbReference>
<evidence type="ECO:0000255" key="1">
    <source>
        <dbReference type="HAMAP-Rule" id="MF_01346"/>
    </source>
</evidence>
<evidence type="ECO:0000256" key="2">
    <source>
        <dbReference type="SAM" id="MobiDB-lite"/>
    </source>
</evidence>
<name>ATPA_MYCVP</name>
<sequence>MAELTISASDIEGAIEDYVSSFTADSGREEIGVVIDAGDGIAHVEGLPSVMTQELLEFPGGVLGVALNLDEHSVGAVILGEFEKIEQGQQVKRTGEVLSVPVGDAFLGRVINPLGQPIDGQGDIEAEGRRALELQAPSVVQRQGVSEPLQTGIKAIDSMTPIGRGQRQLIIGDRKTGKTAVCVDTILNQREAWATGDPKQQVRCVYVAIGQKGTTIASVKRALEEGGAMECTTIVAAPASDAAGFKWLAPYTGSAIGQHWMYDGKHVLIVFDDLSKQADAYRAISLLLRRPPGREAFPGDVFYLHSRLLERCAKLSDELGGGSMTGLPIIETKANDISAFIPTNVISITDGQCFLESDLFNQGVRPAINVGVSVSRVGGAAQIKAMKEVAGSLRLELSQYRELEAFAAFASDLDAASKAQLDRGARLVELLKQPQYTPYPVEDQVVAIYLGTGGHLDSVPVEDVARFESELLEHVKASHGDILAGIRESKKLSEEAEQKLANVINEFKKGFSASDGSSVVVNEAEAEAMDEADVEKESVKVRKPAPKK</sequence>
<reference key="1">
    <citation type="submission" date="2006-12" db="EMBL/GenBank/DDBJ databases">
        <title>Complete sequence of Mycobacterium vanbaalenii PYR-1.</title>
        <authorList>
            <consortium name="US DOE Joint Genome Institute"/>
            <person name="Copeland A."/>
            <person name="Lucas S."/>
            <person name="Lapidus A."/>
            <person name="Barry K."/>
            <person name="Detter J.C."/>
            <person name="Glavina del Rio T."/>
            <person name="Hammon N."/>
            <person name="Israni S."/>
            <person name="Dalin E."/>
            <person name="Tice H."/>
            <person name="Pitluck S."/>
            <person name="Singan V."/>
            <person name="Schmutz J."/>
            <person name="Larimer F."/>
            <person name="Land M."/>
            <person name="Hauser L."/>
            <person name="Kyrpides N."/>
            <person name="Anderson I.J."/>
            <person name="Miller C."/>
            <person name="Richardson P."/>
        </authorList>
    </citation>
    <scope>NUCLEOTIDE SEQUENCE [LARGE SCALE GENOMIC DNA]</scope>
    <source>
        <strain>DSM 7251 / JCM 13017 / BCRC 16820 / KCTC 9966 / NRRL B-24157 / PYR-1</strain>
    </source>
</reference>
<accession>A1TD57</accession>
<protein>
    <recommendedName>
        <fullName evidence="1">ATP synthase subunit alpha</fullName>
        <ecNumber evidence="1">7.1.2.2</ecNumber>
    </recommendedName>
    <alternativeName>
        <fullName evidence="1">ATP synthase F1 sector subunit alpha</fullName>
    </alternativeName>
    <alternativeName>
        <fullName evidence="1">F-ATPase subunit alpha</fullName>
    </alternativeName>
</protein>
<proteinExistence type="inferred from homology"/>
<comment type="function">
    <text evidence="1">Produces ATP from ADP in the presence of a proton gradient across the membrane. The alpha chain is a regulatory subunit.</text>
</comment>
<comment type="catalytic activity">
    <reaction evidence="1">
        <text>ATP + H2O + 4 H(+)(in) = ADP + phosphate + 5 H(+)(out)</text>
        <dbReference type="Rhea" id="RHEA:57720"/>
        <dbReference type="ChEBI" id="CHEBI:15377"/>
        <dbReference type="ChEBI" id="CHEBI:15378"/>
        <dbReference type="ChEBI" id="CHEBI:30616"/>
        <dbReference type="ChEBI" id="CHEBI:43474"/>
        <dbReference type="ChEBI" id="CHEBI:456216"/>
        <dbReference type="EC" id="7.1.2.2"/>
    </reaction>
</comment>
<comment type="subunit">
    <text evidence="1">F-type ATPases have 2 components, CF(1) - the catalytic core - and CF(0) - the membrane proton channel. CF(1) has five subunits: alpha(3), beta(3), gamma(1), delta(1), epsilon(1). CF(0) has three main subunits: a(1), b(2) and c(9-12). The alpha and beta chains form an alternating ring which encloses part of the gamma chain. CF(1) is attached to CF(0) by a central stalk formed by the gamma and epsilon chains, while a peripheral stalk is formed by the delta and b chains.</text>
</comment>
<comment type="subcellular location">
    <subcellularLocation>
        <location evidence="1">Cell membrane</location>
        <topology evidence="1">Peripheral membrane protein</topology>
    </subcellularLocation>
</comment>
<comment type="similarity">
    <text evidence="1">Belongs to the ATPase alpha/beta chains family.</text>
</comment>
<keyword id="KW-0066">ATP synthesis</keyword>
<keyword id="KW-0067">ATP-binding</keyword>
<keyword id="KW-1003">Cell membrane</keyword>
<keyword id="KW-0139">CF(1)</keyword>
<keyword id="KW-0375">Hydrogen ion transport</keyword>
<keyword id="KW-0406">Ion transport</keyword>
<keyword id="KW-0472">Membrane</keyword>
<keyword id="KW-0547">Nucleotide-binding</keyword>
<keyword id="KW-1278">Translocase</keyword>
<keyword id="KW-0813">Transport</keyword>
<feature type="chain" id="PRO_0000302675" description="ATP synthase subunit alpha">
    <location>
        <begin position="1"/>
        <end position="548"/>
    </location>
</feature>
<feature type="region of interest" description="Disordered" evidence="2">
    <location>
        <begin position="526"/>
        <end position="548"/>
    </location>
</feature>
<feature type="binding site" evidence="1">
    <location>
        <begin position="172"/>
        <end position="179"/>
    </location>
    <ligand>
        <name>ATP</name>
        <dbReference type="ChEBI" id="CHEBI:30616"/>
    </ligand>
</feature>
<feature type="site" description="Required for activity" evidence="1">
    <location>
        <position position="373"/>
    </location>
</feature>
<gene>
    <name evidence="1" type="primary">atpA</name>
    <name type="ordered locus">Mvan_4330</name>
</gene>
<organism>
    <name type="scientific">Mycolicibacterium vanbaalenii (strain DSM 7251 / JCM 13017 / BCRC 16820 / KCTC 9966 / NRRL B-24157 / PYR-1)</name>
    <name type="common">Mycobacterium vanbaalenii</name>
    <dbReference type="NCBI Taxonomy" id="350058"/>
    <lineage>
        <taxon>Bacteria</taxon>
        <taxon>Bacillati</taxon>
        <taxon>Actinomycetota</taxon>
        <taxon>Actinomycetes</taxon>
        <taxon>Mycobacteriales</taxon>
        <taxon>Mycobacteriaceae</taxon>
        <taxon>Mycolicibacterium</taxon>
    </lineage>
</organism>